<dbReference type="EC" id="6.1.1.16" evidence="1"/>
<dbReference type="EMBL" id="CP001340">
    <property type="protein sequence ID" value="ACL93957.1"/>
    <property type="molecule type" value="Genomic_DNA"/>
</dbReference>
<dbReference type="RefSeq" id="WP_010918348.1">
    <property type="nucleotide sequence ID" value="NC_011916.1"/>
</dbReference>
<dbReference type="RefSeq" id="YP_002515865.1">
    <property type="nucleotide sequence ID" value="NC_011916.1"/>
</dbReference>
<dbReference type="SMR" id="B8GZS3"/>
<dbReference type="GeneID" id="7332182"/>
<dbReference type="KEGG" id="ccs:CCNA_00492"/>
<dbReference type="PATRIC" id="fig|565050.3.peg.483"/>
<dbReference type="HOGENOM" id="CLU_013528_0_1_5"/>
<dbReference type="OrthoDB" id="9815130at2"/>
<dbReference type="PhylomeDB" id="B8GZS3"/>
<dbReference type="Proteomes" id="UP000001364">
    <property type="component" value="Chromosome"/>
</dbReference>
<dbReference type="GO" id="GO:0005829">
    <property type="term" value="C:cytosol"/>
    <property type="evidence" value="ECO:0007669"/>
    <property type="project" value="TreeGrafter"/>
</dbReference>
<dbReference type="GO" id="GO:0005524">
    <property type="term" value="F:ATP binding"/>
    <property type="evidence" value="ECO:0007669"/>
    <property type="project" value="UniProtKB-UniRule"/>
</dbReference>
<dbReference type="GO" id="GO:0004817">
    <property type="term" value="F:cysteine-tRNA ligase activity"/>
    <property type="evidence" value="ECO:0007669"/>
    <property type="project" value="UniProtKB-UniRule"/>
</dbReference>
<dbReference type="GO" id="GO:0008270">
    <property type="term" value="F:zinc ion binding"/>
    <property type="evidence" value="ECO:0007669"/>
    <property type="project" value="UniProtKB-UniRule"/>
</dbReference>
<dbReference type="GO" id="GO:0006423">
    <property type="term" value="P:cysteinyl-tRNA aminoacylation"/>
    <property type="evidence" value="ECO:0007669"/>
    <property type="project" value="UniProtKB-UniRule"/>
</dbReference>
<dbReference type="CDD" id="cd00672">
    <property type="entry name" value="CysRS_core"/>
    <property type="match status" value="1"/>
</dbReference>
<dbReference type="FunFam" id="3.40.50.620:FF:000068">
    <property type="entry name" value="Cysteine--tRNA ligase"/>
    <property type="match status" value="1"/>
</dbReference>
<dbReference type="Gene3D" id="1.20.120.1910">
    <property type="entry name" value="Cysteine-tRNA ligase, C-terminal anti-codon recognition domain"/>
    <property type="match status" value="1"/>
</dbReference>
<dbReference type="Gene3D" id="3.40.50.620">
    <property type="entry name" value="HUPs"/>
    <property type="match status" value="1"/>
</dbReference>
<dbReference type="HAMAP" id="MF_00041">
    <property type="entry name" value="Cys_tRNA_synth"/>
    <property type="match status" value="1"/>
</dbReference>
<dbReference type="InterPro" id="IPR015803">
    <property type="entry name" value="Cys-tRNA-ligase"/>
</dbReference>
<dbReference type="InterPro" id="IPR015273">
    <property type="entry name" value="Cys-tRNA-synt_Ia_DALR"/>
</dbReference>
<dbReference type="InterPro" id="IPR024909">
    <property type="entry name" value="Cys-tRNA/MSH_ligase"/>
</dbReference>
<dbReference type="InterPro" id="IPR056411">
    <property type="entry name" value="CysS_C"/>
</dbReference>
<dbReference type="InterPro" id="IPR014729">
    <property type="entry name" value="Rossmann-like_a/b/a_fold"/>
</dbReference>
<dbReference type="InterPro" id="IPR032678">
    <property type="entry name" value="tRNA-synt_1_cat_dom"/>
</dbReference>
<dbReference type="InterPro" id="IPR009080">
    <property type="entry name" value="tRNAsynth_Ia_anticodon-bd"/>
</dbReference>
<dbReference type="NCBIfam" id="TIGR00435">
    <property type="entry name" value="cysS"/>
    <property type="match status" value="1"/>
</dbReference>
<dbReference type="PANTHER" id="PTHR10890:SF3">
    <property type="entry name" value="CYSTEINE--TRNA LIGASE, CYTOPLASMIC"/>
    <property type="match status" value="1"/>
</dbReference>
<dbReference type="PANTHER" id="PTHR10890">
    <property type="entry name" value="CYSTEINYL-TRNA SYNTHETASE"/>
    <property type="match status" value="1"/>
</dbReference>
<dbReference type="Pfam" id="PF23493">
    <property type="entry name" value="CysS_C"/>
    <property type="match status" value="1"/>
</dbReference>
<dbReference type="Pfam" id="PF09190">
    <property type="entry name" value="DALR_2"/>
    <property type="match status" value="1"/>
</dbReference>
<dbReference type="Pfam" id="PF01406">
    <property type="entry name" value="tRNA-synt_1e"/>
    <property type="match status" value="1"/>
</dbReference>
<dbReference type="PRINTS" id="PR00983">
    <property type="entry name" value="TRNASYNTHCYS"/>
</dbReference>
<dbReference type="SMART" id="SM00840">
    <property type="entry name" value="DALR_2"/>
    <property type="match status" value="1"/>
</dbReference>
<dbReference type="SUPFAM" id="SSF47323">
    <property type="entry name" value="Anticodon-binding domain of a subclass of class I aminoacyl-tRNA synthetases"/>
    <property type="match status" value="1"/>
</dbReference>
<dbReference type="SUPFAM" id="SSF52374">
    <property type="entry name" value="Nucleotidylyl transferase"/>
    <property type="match status" value="1"/>
</dbReference>
<reference key="1">
    <citation type="journal article" date="2010" name="J. Bacteriol.">
        <title>The genetic basis of laboratory adaptation in Caulobacter crescentus.</title>
        <authorList>
            <person name="Marks M.E."/>
            <person name="Castro-Rojas C.M."/>
            <person name="Teiling C."/>
            <person name="Du L."/>
            <person name="Kapatral V."/>
            <person name="Walunas T.L."/>
            <person name="Crosson S."/>
        </authorList>
    </citation>
    <scope>NUCLEOTIDE SEQUENCE [LARGE SCALE GENOMIC DNA]</scope>
    <source>
        <strain>NA1000 / CB15N</strain>
    </source>
</reference>
<evidence type="ECO:0000255" key="1">
    <source>
        <dbReference type="HAMAP-Rule" id="MF_00041"/>
    </source>
</evidence>
<name>SYC_CAUVN</name>
<accession>B8GZS3</accession>
<comment type="catalytic activity">
    <reaction evidence="1">
        <text>tRNA(Cys) + L-cysteine + ATP = L-cysteinyl-tRNA(Cys) + AMP + diphosphate</text>
        <dbReference type="Rhea" id="RHEA:17773"/>
        <dbReference type="Rhea" id="RHEA-COMP:9661"/>
        <dbReference type="Rhea" id="RHEA-COMP:9679"/>
        <dbReference type="ChEBI" id="CHEBI:30616"/>
        <dbReference type="ChEBI" id="CHEBI:33019"/>
        <dbReference type="ChEBI" id="CHEBI:35235"/>
        <dbReference type="ChEBI" id="CHEBI:78442"/>
        <dbReference type="ChEBI" id="CHEBI:78517"/>
        <dbReference type="ChEBI" id="CHEBI:456215"/>
        <dbReference type="EC" id="6.1.1.16"/>
    </reaction>
</comment>
<comment type="cofactor">
    <cofactor evidence="1">
        <name>Zn(2+)</name>
        <dbReference type="ChEBI" id="CHEBI:29105"/>
    </cofactor>
    <text evidence="1">Binds 1 zinc ion per subunit.</text>
</comment>
<comment type="subunit">
    <text evidence="1">Monomer.</text>
</comment>
<comment type="subcellular location">
    <subcellularLocation>
        <location evidence="1">Cytoplasm</location>
    </subcellularLocation>
</comment>
<comment type="similarity">
    <text evidence="1">Belongs to the class-I aminoacyl-tRNA synthetase family.</text>
</comment>
<protein>
    <recommendedName>
        <fullName evidence="1">Cysteine--tRNA ligase</fullName>
        <ecNumber evidence="1">6.1.1.16</ecNumber>
    </recommendedName>
    <alternativeName>
        <fullName evidence="1">Cysteinyl-tRNA synthetase</fullName>
        <shortName evidence="1">CysRS</shortName>
    </alternativeName>
</protein>
<organism>
    <name type="scientific">Caulobacter vibrioides (strain NA1000 / CB15N)</name>
    <name type="common">Caulobacter crescentus</name>
    <dbReference type="NCBI Taxonomy" id="565050"/>
    <lineage>
        <taxon>Bacteria</taxon>
        <taxon>Pseudomonadati</taxon>
        <taxon>Pseudomonadota</taxon>
        <taxon>Alphaproteobacteria</taxon>
        <taxon>Caulobacterales</taxon>
        <taxon>Caulobacteraceae</taxon>
        <taxon>Caulobacter</taxon>
    </lineage>
</organism>
<sequence length="463" mass="50881">MTLKIHDTLTREKRDFVPADPQRVTMYVCGPTVYNYAHIGNFRPVVVFDVLFRVLRHLYGEDAVVYARNVTDVDDKINQKAADEGVPISVITDRYLAAYHQDADALGALRPTLEPKATEHIGAILEMIGQLVENGSAYAAEGHVLFDTQSFADYGQLSGRPLDEMIAGARVEVAPYKRHPADFVLWKPSKENEPEWESPWGAGRPGWHIECSAMIDKALGQTIDIHAGGIDLTFPHHENEVAQSRCAHKTSVLANYWMHNGFLDMSGEKMSKSLGNVIIPHELLETTPGEVIRWALLSAHYRQPLDWTPELLEQSKKSLDRLYGALRRAKDVAPDQAMEAPAEVMSALMDDLNTPLATSAFFEVSSAIEKAVTAGDTVAIAANKARLLEAGALLGFLQADPDAWFEGDASDELKAQVEDLLAKRVAARAAKDWSAADAIRGELDALGVVVMDGPAGATWRMKD</sequence>
<feature type="chain" id="PRO_1000199050" description="Cysteine--tRNA ligase">
    <location>
        <begin position="1"/>
        <end position="463"/>
    </location>
</feature>
<feature type="short sequence motif" description="'HIGH' region">
    <location>
        <begin position="31"/>
        <end position="41"/>
    </location>
</feature>
<feature type="short sequence motif" description="'KMSKS' region">
    <location>
        <begin position="269"/>
        <end position="273"/>
    </location>
</feature>
<feature type="binding site" evidence="1">
    <location>
        <position position="29"/>
    </location>
    <ligand>
        <name>Zn(2+)</name>
        <dbReference type="ChEBI" id="CHEBI:29105"/>
    </ligand>
</feature>
<feature type="binding site" evidence="1">
    <location>
        <position position="211"/>
    </location>
    <ligand>
        <name>Zn(2+)</name>
        <dbReference type="ChEBI" id="CHEBI:29105"/>
    </ligand>
</feature>
<feature type="binding site" evidence="1">
    <location>
        <position position="236"/>
    </location>
    <ligand>
        <name>Zn(2+)</name>
        <dbReference type="ChEBI" id="CHEBI:29105"/>
    </ligand>
</feature>
<feature type="binding site" evidence="1">
    <location>
        <position position="240"/>
    </location>
    <ligand>
        <name>Zn(2+)</name>
        <dbReference type="ChEBI" id="CHEBI:29105"/>
    </ligand>
</feature>
<feature type="binding site" evidence="1">
    <location>
        <position position="272"/>
    </location>
    <ligand>
        <name>ATP</name>
        <dbReference type="ChEBI" id="CHEBI:30616"/>
    </ligand>
</feature>
<gene>
    <name evidence="1" type="primary">cysS</name>
    <name type="ordered locus">CCNA_00492</name>
</gene>
<keyword id="KW-0030">Aminoacyl-tRNA synthetase</keyword>
<keyword id="KW-0067">ATP-binding</keyword>
<keyword id="KW-0963">Cytoplasm</keyword>
<keyword id="KW-0436">Ligase</keyword>
<keyword id="KW-0479">Metal-binding</keyword>
<keyword id="KW-0547">Nucleotide-binding</keyword>
<keyword id="KW-0648">Protein biosynthesis</keyword>
<keyword id="KW-1185">Reference proteome</keyword>
<keyword id="KW-0862">Zinc</keyword>
<proteinExistence type="inferred from homology"/>